<protein>
    <recommendedName>
        <fullName evidence="1">Small ribosomal subunit protein bS18</fullName>
    </recommendedName>
    <alternativeName>
        <fullName evidence="2">30S ribosomal protein S18</fullName>
    </alternativeName>
</protein>
<comment type="function">
    <text evidence="1">Binds as a heterodimer with protein bS6 to the central domain of the 16S rRNA, where it helps stabilize the platform of the 30S subunit.</text>
</comment>
<comment type="subunit">
    <text evidence="1">Part of the 30S ribosomal subunit. Forms a tight heterodimer with protein bS6.</text>
</comment>
<comment type="similarity">
    <text evidence="1">Belongs to the bacterial ribosomal protein bS18 family.</text>
</comment>
<proteinExistence type="inferred from homology"/>
<sequence length="92" mass="10873">MAFVKRDNKNKKRFQQQNPLFKRKRFCRFTVAGVEQIDYKDLDTLKDFIGDNGKITPARLTGTKAHYQRQLDTAIKRARFLALLPYTDLHKN</sequence>
<keyword id="KW-0687">Ribonucleoprotein</keyword>
<keyword id="KW-0689">Ribosomal protein</keyword>
<keyword id="KW-0694">RNA-binding</keyword>
<keyword id="KW-0699">rRNA-binding</keyword>
<name>RS18_CUPTR</name>
<accession>B3R2P5</accession>
<evidence type="ECO:0000255" key="1">
    <source>
        <dbReference type="HAMAP-Rule" id="MF_00270"/>
    </source>
</evidence>
<evidence type="ECO:0000305" key="2"/>
<reference key="1">
    <citation type="journal article" date="2008" name="Genome Res.">
        <title>Genome sequence of the beta-rhizobium Cupriavidus taiwanensis and comparative genomics of rhizobia.</title>
        <authorList>
            <person name="Amadou C."/>
            <person name="Pascal G."/>
            <person name="Mangenot S."/>
            <person name="Glew M."/>
            <person name="Bontemps C."/>
            <person name="Capela D."/>
            <person name="Carrere S."/>
            <person name="Cruveiller S."/>
            <person name="Dossat C."/>
            <person name="Lajus A."/>
            <person name="Marchetti M."/>
            <person name="Poinsot V."/>
            <person name="Rouy Z."/>
            <person name="Servin B."/>
            <person name="Saad M."/>
            <person name="Schenowitz C."/>
            <person name="Barbe V."/>
            <person name="Batut J."/>
            <person name="Medigue C."/>
            <person name="Masson-Boivin C."/>
        </authorList>
    </citation>
    <scope>NUCLEOTIDE SEQUENCE [LARGE SCALE GENOMIC DNA]</scope>
    <source>
        <strain>DSM 17343 / BCRC 17206 / CCUG 44338 / CIP 107171 / LMG 19424 / R1</strain>
    </source>
</reference>
<gene>
    <name evidence="1" type="primary">rpsR</name>
    <name type="ordered locus">RALTA_A1821</name>
</gene>
<feature type="chain" id="PRO_1000114416" description="Small ribosomal subunit protein bS18">
    <location>
        <begin position="1"/>
        <end position="92"/>
    </location>
</feature>
<dbReference type="EMBL" id="CU633749">
    <property type="protein sequence ID" value="CAQ69763.1"/>
    <property type="molecule type" value="Genomic_DNA"/>
</dbReference>
<dbReference type="RefSeq" id="WP_006575387.1">
    <property type="nucleotide sequence ID" value="NC_010528.1"/>
</dbReference>
<dbReference type="SMR" id="B3R2P5"/>
<dbReference type="GeneID" id="98339876"/>
<dbReference type="KEGG" id="cti:RALTA_A1821"/>
<dbReference type="eggNOG" id="COG0238">
    <property type="taxonomic scope" value="Bacteria"/>
</dbReference>
<dbReference type="HOGENOM" id="CLU_148710_0_3_4"/>
<dbReference type="BioCyc" id="CTAI977880:RALTA_RS08780-MONOMER"/>
<dbReference type="Proteomes" id="UP000001692">
    <property type="component" value="Chromosome 1"/>
</dbReference>
<dbReference type="GO" id="GO:0022627">
    <property type="term" value="C:cytosolic small ribosomal subunit"/>
    <property type="evidence" value="ECO:0007669"/>
    <property type="project" value="TreeGrafter"/>
</dbReference>
<dbReference type="GO" id="GO:0070181">
    <property type="term" value="F:small ribosomal subunit rRNA binding"/>
    <property type="evidence" value="ECO:0007669"/>
    <property type="project" value="TreeGrafter"/>
</dbReference>
<dbReference type="GO" id="GO:0003735">
    <property type="term" value="F:structural constituent of ribosome"/>
    <property type="evidence" value="ECO:0007669"/>
    <property type="project" value="InterPro"/>
</dbReference>
<dbReference type="GO" id="GO:0006412">
    <property type="term" value="P:translation"/>
    <property type="evidence" value="ECO:0007669"/>
    <property type="project" value="UniProtKB-UniRule"/>
</dbReference>
<dbReference type="Gene3D" id="4.10.640.10">
    <property type="entry name" value="Ribosomal protein S18"/>
    <property type="match status" value="1"/>
</dbReference>
<dbReference type="HAMAP" id="MF_00270">
    <property type="entry name" value="Ribosomal_bS18"/>
    <property type="match status" value="1"/>
</dbReference>
<dbReference type="InterPro" id="IPR001648">
    <property type="entry name" value="Ribosomal_bS18"/>
</dbReference>
<dbReference type="InterPro" id="IPR018275">
    <property type="entry name" value="Ribosomal_bS18_CS"/>
</dbReference>
<dbReference type="InterPro" id="IPR036870">
    <property type="entry name" value="Ribosomal_bS18_sf"/>
</dbReference>
<dbReference type="NCBIfam" id="TIGR00165">
    <property type="entry name" value="S18"/>
    <property type="match status" value="1"/>
</dbReference>
<dbReference type="PANTHER" id="PTHR13479">
    <property type="entry name" value="30S RIBOSOMAL PROTEIN S18"/>
    <property type="match status" value="1"/>
</dbReference>
<dbReference type="PANTHER" id="PTHR13479:SF40">
    <property type="entry name" value="SMALL RIBOSOMAL SUBUNIT PROTEIN BS18M"/>
    <property type="match status" value="1"/>
</dbReference>
<dbReference type="Pfam" id="PF01084">
    <property type="entry name" value="Ribosomal_S18"/>
    <property type="match status" value="1"/>
</dbReference>
<dbReference type="PRINTS" id="PR00974">
    <property type="entry name" value="RIBOSOMALS18"/>
</dbReference>
<dbReference type="SUPFAM" id="SSF46911">
    <property type="entry name" value="Ribosomal protein S18"/>
    <property type="match status" value="1"/>
</dbReference>
<dbReference type="PROSITE" id="PS00057">
    <property type="entry name" value="RIBOSOMAL_S18"/>
    <property type="match status" value="1"/>
</dbReference>
<organism>
    <name type="scientific">Cupriavidus taiwanensis (strain DSM 17343 / BCRC 17206 / CCUG 44338 / CIP 107171 / LMG 19424 / R1)</name>
    <name type="common">Ralstonia taiwanensis (strain LMG 19424)</name>
    <dbReference type="NCBI Taxonomy" id="977880"/>
    <lineage>
        <taxon>Bacteria</taxon>
        <taxon>Pseudomonadati</taxon>
        <taxon>Pseudomonadota</taxon>
        <taxon>Betaproteobacteria</taxon>
        <taxon>Burkholderiales</taxon>
        <taxon>Burkholderiaceae</taxon>
        <taxon>Cupriavidus</taxon>
    </lineage>
</organism>